<comment type="similarity">
    <text evidence="1">Belongs to the universal ribosomal protein uL29 family.</text>
</comment>
<proteinExistence type="inferred from homology"/>
<organism>
    <name type="scientific">Clostridium botulinum (strain Langeland / NCTC 10281 / Type F)</name>
    <dbReference type="NCBI Taxonomy" id="441772"/>
    <lineage>
        <taxon>Bacteria</taxon>
        <taxon>Bacillati</taxon>
        <taxon>Bacillota</taxon>
        <taxon>Clostridia</taxon>
        <taxon>Eubacteriales</taxon>
        <taxon>Clostridiaceae</taxon>
        <taxon>Clostridium</taxon>
    </lineage>
</organism>
<name>RL29_CLOBL</name>
<accession>A7GJ66</accession>
<sequence length="70" mass="8327">MKARELQELRKSSPQELQSKLNDLKAELFNLRFQLATGQLENPMRIREVKKSIAQIKTILREEEIRAYQQ</sequence>
<feature type="chain" id="PRO_1000007458" description="Large ribosomal subunit protein uL29">
    <location>
        <begin position="1"/>
        <end position="70"/>
    </location>
</feature>
<evidence type="ECO:0000255" key="1">
    <source>
        <dbReference type="HAMAP-Rule" id="MF_00374"/>
    </source>
</evidence>
<evidence type="ECO:0000305" key="2"/>
<keyword id="KW-0687">Ribonucleoprotein</keyword>
<keyword id="KW-0689">Ribosomal protein</keyword>
<gene>
    <name evidence="1" type="primary">rpmC</name>
    <name type="ordered locus">CLI_3655</name>
</gene>
<dbReference type="EMBL" id="CP000728">
    <property type="protein sequence ID" value="ABS41465.1"/>
    <property type="molecule type" value="Genomic_DNA"/>
</dbReference>
<dbReference type="RefSeq" id="WP_003357691.1">
    <property type="nucleotide sequence ID" value="NC_009699.1"/>
</dbReference>
<dbReference type="SMR" id="A7GJ66"/>
<dbReference type="GeneID" id="92940242"/>
<dbReference type="KEGG" id="cbf:CLI_3655"/>
<dbReference type="HOGENOM" id="CLU_158491_5_2_9"/>
<dbReference type="Proteomes" id="UP000002410">
    <property type="component" value="Chromosome"/>
</dbReference>
<dbReference type="GO" id="GO:0022625">
    <property type="term" value="C:cytosolic large ribosomal subunit"/>
    <property type="evidence" value="ECO:0007669"/>
    <property type="project" value="TreeGrafter"/>
</dbReference>
<dbReference type="GO" id="GO:0003735">
    <property type="term" value="F:structural constituent of ribosome"/>
    <property type="evidence" value="ECO:0007669"/>
    <property type="project" value="InterPro"/>
</dbReference>
<dbReference type="GO" id="GO:0006412">
    <property type="term" value="P:translation"/>
    <property type="evidence" value="ECO:0007669"/>
    <property type="project" value="UniProtKB-UniRule"/>
</dbReference>
<dbReference type="CDD" id="cd00427">
    <property type="entry name" value="Ribosomal_L29_HIP"/>
    <property type="match status" value="1"/>
</dbReference>
<dbReference type="FunFam" id="1.10.287.310:FF:000001">
    <property type="entry name" value="50S ribosomal protein L29"/>
    <property type="match status" value="1"/>
</dbReference>
<dbReference type="Gene3D" id="1.10.287.310">
    <property type="match status" value="1"/>
</dbReference>
<dbReference type="HAMAP" id="MF_00374">
    <property type="entry name" value="Ribosomal_uL29"/>
    <property type="match status" value="1"/>
</dbReference>
<dbReference type="InterPro" id="IPR050063">
    <property type="entry name" value="Ribosomal_protein_uL29"/>
</dbReference>
<dbReference type="InterPro" id="IPR001854">
    <property type="entry name" value="Ribosomal_uL29"/>
</dbReference>
<dbReference type="InterPro" id="IPR018254">
    <property type="entry name" value="Ribosomal_uL29_CS"/>
</dbReference>
<dbReference type="InterPro" id="IPR036049">
    <property type="entry name" value="Ribosomal_uL29_sf"/>
</dbReference>
<dbReference type="NCBIfam" id="TIGR00012">
    <property type="entry name" value="L29"/>
    <property type="match status" value="1"/>
</dbReference>
<dbReference type="PANTHER" id="PTHR10916">
    <property type="entry name" value="60S RIBOSOMAL PROTEIN L35/50S RIBOSOMAL PROTEIN L29"/>
    <property type="match status" value="1"/>
</dbReference>
<dbReference type="PANTHER" id="PTHR10916:SF0">
    <property type="entry name" value="LARGE RIBOSOMAL SUBUNIT PROTEIN UL29C"/>
    <property type="match status" value="1"/>
</dbReference>
<dbReference type="Pfam" id="PF00831">
    <property type="entry name" value="Ribosomal_L29"/>
    <property type="match status" value="1"/>
</dbReference>
<dbReference type="SUPFAM" id="SSF46561">
    <property type="entry name" value="Ribosomal protein L29 (L29p)"/>
    <property type="match status" value="1"/>
</dbReference>
<dbReference type="PROSITE" id="PS00579">
    <property type="entry name" value="RIBOSOMAL_L29"/>
    <property type="match status" value="1"/>
</dbReference>
<protein>
    <recommendedName>
        <fullName evidence="1">Large ribosomal subunit protein uL29</fullName>
    </recommendedName>
    <alternativeName>
        <fullName evidence="2">50S ribosomal protein L29</fullName>
    </alternativeName>
</protein>
<reference key="1">
    <citation type="submission" date="2007-06" db="EMBL/GenBank/DDBJ databases">
        <authorList>
            <person name="Brinkac L.M."/>
            <person name="Daugherty S."/>
            <person name="Dodson R.J."/>
            <person name="Madupu R."/>
            <person name="Brown J.L."/>
            <person name="Bruce D."/>
            <person name="Detter C."/>
            <person name="Munk C."/>
            <person name="Smith L.A."/>
            <person name="Smith T.J."/>
            <person name="White O."/>
            <person name="Brettin T.S."/>
        </authorList>
    </citation>
    <scope>NUCLEOTIDE SEQUENCE [LARGE SCALE GENOMIC DNA]</scope>
    <source>
        <strain>Langeland / NCTC 10281 / Type F</strain>
    </source>
</reference>